<protein>
    <recommendedName>
        <fullName>Polymeric immunoglobulin receptor</fullName>
        <shortName>PIgR</shortName>
        <shortName>Poly-Ig receptor</shortName>
    </recommendedName>
    <component>
        <recommendedName>
            <fullName>Secretory component</fullName>
        </recommendedName>
    </component>
</protein>
<proteinExistence type="evidence at protein level"/>
<feature type="chain" id="PRO_0000308185" description="Polymeric immunoglobulin receptor">
    <location>
        <begin position="1" status="less than"/>
        <end position="14" status="greater than"/>
    </location>
</feature>
<feature type="chain" id="PRO_0000308186" description="Secretory component" evidence="1">
    <location>
        <begin position="1" status="less than"/>
        <end position="14" status="greater than"/>
    </location>
</feature>
<feature type="domain" description="Ig-like V-type">
    <location>
        <begin position="1" status="less than"/>
        <end position="14" status="greater than"/>
    </location>
</feature>
<feature type="non-terminal residue">
    <location>
        <position position="1"/>
    </location>
</feature>
<feature type="non-terminal residue">
    <location>
        <position position="14"/>
    </location>
</feature>
<gene>
    <name evidence="2" type="primary">PIGR</name>
</gene>
<dbReference type="Proteomes" id="UP000291000">
    <property type="component" value="Unassembled WGS sequence"/>
</dbReference>
<dbReference type="Proteomes" id="UP000694566">
    <property type="component" value="Unplaced"/>
</dbReference>
<dbReference type="GO" id="GO:0005576">
    <property type="term" value="C:extracellular region"/>
    <property type="evidence" value="ECO:0007669"/>
    <property type="project" value="UniProtKB-SubCell"/>
</dbReference>
<dbReference type="GO" id="GO:0005886">
    <property type="term" value="C:plasma membrane"/>
    <property type="evidence" value="ECO:0007669"/>
    <property type="project" value="UniProtKB-SubCell"/>
</dbReference>
<name>PIGR_CAPHI</name>
<sequence length="14" mass="1515">YGETAAVYVAVESR</sequence>
<evidence type="ECO:0000250" key="1"/>
<evidence type="ECO:0000250" key="2">
    <source>
        <dbReference type="UniProtKB" id="P01833"/>
    </source>
</evidence>
<evidence type="ECO:0000255" key="3"/>
<evidence type="ECO:0000305" key="4"/>
<reference evidence="4" key="1">
    <citation type="journal article" date="2007" name="Anal. Bioanal. Chem.">
        <title>Access to lower abundant bovine and caprine whey proteins: the impact of caseins and lactoglobulin on proteome analysis.</title>
        <authorList>
            <person name="Koenig S."/>
            <person name="Mehlich A.M."/>
            <person name="Ackermann D."/>
        </authorList>
    </citation>
    <scope>PROTEIN SEQUENCE</scope>
</reference>
<organism>
    <name type="scientific">Capra hircus</name>
    <name type="common">Goat</name>
    <dbReference type="NCBI Taxonomy" id="9925"/>
    <lineage>
        <taxon>Eukaryota</taxon>
        <taxon>Metazoa</taxon>
        <taxon>Chordata</taxon>
        <taxon>Craniata</taxon>
        <taxon>Vertebrata</taxon>
        <taxon>Euteleostomi</taxon>
        <taxon>Mammalia</taxon>
        <taxon>Eutheria</taxon>
        <taxon>Laurasiatheria</taxon>
        <taxon>Artiodactyla</taxon>
        <taxon>Ruminantia</taxon>
        <taxon>Pecora</taxon>
        <taxon>Bovidae</taxon>
        <taxon>Caprinae</taxon>
        <taxon>Capra</taxon>
    </lineage>
</organism>
<comment type="function">
    <text evidence="2">Mediates selective transcytosis of polymeric IgA and IgM across mucosal epithelial cells. Binds polymeric IgA and IgM at the basolateral surface of epithelial cells. The complex is then transported across the cell to be secreted at the apical surface. During this process, a cleavage occurs that separates the extracellular (known as the secretory component) from the transmembrane segment (By similarity). Through its N-linked glycans ensures anchoring of secretory IgA (sIgA) molecules to mucus lining the epithelial surface to neutralize extracellular pathogens. On its own (free form) may act as a non-specific microbial scavenger to prevent pathogen interaction with epithelial cells (By similarity).</text>
</comment>
<comment type="subunit">
    <text evidence="2">Interacts (mainly via CDR1-like domain) with dimeric IgA. Interacts (mainly via CDR2-like domain) with pentameric IgM (By similarity). Either free or part of the secretory IgA (sIgA) complex that consists of two, four or five IgA monomers, and two additional non-Ig polypeptides, namely the JCHAIN and the secretory component (the proteolytic product of PIGR). Free secretory component interacts with bacterial antigens toxA of C.difficile and eaeA of E.coli (By similarity).</text>
</comment>
<comment type="subcellular location">
    <subcellularLocation>
        <location evidence="2">Cell membrane</location>
        <topology evidence="3">Single-pass type I membrane protein</topology>
    </subcellularLocation>
    <subcellularLocation>
        <location evidence="2">Secreted</location>
    </subcellularLocation>
</comment>
<comment type="PTM">
    <text evidence="2">N-glycosylated. N-glycosylation is required for anchoring IgA molecules to mucus, but is not necessary for Ig binding.</text>
</comment>
<keyword id="KW-1003">Cell membrane</keyword>
<keyword id="KW-0903">Direct protein sequencing</keyword>
<keyword id="KW-0393">Immunoglobulin domain</keyword>
<keyword id="KW-0472">Membrane</keyword>
<keyword id="KW-1185">Reference proteome</keyword>
<keyword id="KW-0677">Repeat</keyword>
<keyword id="KW-0964">Secreted</keyword>
<keyword id="KW-0812">Transmembrane</keyword>
<accession>P85296</accession>